<reference key="1">
    <citation type="journal article" date="1998" name="Microbiology">
        <title>The 172 kb prkA-addAB region from 83 degrees to 97 degrees of the Bacillus subtilis chromosome contains several dysfunctional genes, the glyB marker, many genes encoding transporter proteins, and the ubiquitous hit gene.</title>
        <authorList>
            <person name="Noback M.A."/>
            <person name="Holsappel S."/>
            <person name="Kiewiet R."/>
            <person name="Terpstra P."/>
            <person name="Wambutt R."/>
            <person name="Wedler H."/>
            <person name="Venema G."/>
            <person name="Bron S."/>
        </authorList>
    </citation>
    <scope>NUCLEOTIDE SEQUENCE [GENOMIC DNA]</scope>
    <source>
        <strain>168</strain>
    </source>
</reference>
<reference key="2">
    <citation type="journal article" date="1997" name="Nature">
        <title>The complete genome sequence of the Gram-positive bacterium Bacillus subtilis.</title>
        <authorList>
            <person name="Kunst F."/>
            <person name="Ogasawara N."/>
            <person name="Moszer I."/>
            <person name="Albertini A.M."/>
            <person name="Alloni G."/>
            <person name="Azevedo V."/>
            <person name="Bertero M.G."/>
            <person name="Bessieres P."/>
            <person name="Bolotin A."/>
            <person name="Borchert S."/>
            <person name="Borriss R."/>
            <person name="Boursier L."/>
            <person name="Brans A."/>
            <person name="Braun M."/>
            <person name="Brignell S.C."/>
            <person name="Bron S."/>
            <person name="Brouillet S."/>
            <person name="Bruschi C.V."/>
            <person name="Caldwell B."/>
            <person name="Capuano V."/>
            <person name="Carter N.M."/>
            <person name="Choi S.-K."/>
            <person name="Codani J.-J."/>
            <person name="Connerton I.F."/>
            <person name="Cummings N.J."/>
            <person name="Daniel R.A."/>
            <person name="Denizot F."/>
            <person name="Devine K.M."/>
            <person name="Duesterhoeft A."/>
            <person name="Ehrlich S.D."/>
            <person name="Emmerson P.T."/>
            <person name="Entian K.-D."/>
            <person name="Errington J."/>
            <person name="Fabret C."/>
            <person name="Ferrari E."/>
            <person name="Foulger D."/>
            <person name="Fritz C."/>
            <person name="Fujita M."/>
            <person name="Fujita Y."/>
            <person name="Fuma S."/>
            <person name="Galizzi A."/>
            <person name="Galleron N."/>
            <person name="Ghim S.-Y."/>
            <person name="Glaser P."/>
            <person name="Goffeau A."/>
            <person name="Golightly E.J."/>
            <person name="Grandi G."/>
            <person name="Guiseppi G."/>
            <person name="Guy B.J."/>
            <person name="Haga K."/>
            <person name="Haiech J."/>
            <person name="Harwood C.R."/>
            <person name="Henaut A."/>
            <person name="Hilbert H."/>
            <person name="Holsappel S."/>
            <person name="Hosono S."/>
            <person name="Hullo M.-F."/>
            <person name="Itaya M."/>
            <person name="Jones L.-M."/>
            <person name="Joris B."/>
            <person name="Karamata D."/>
            <person name="Kasahara Y."/>
            <person name="Klaerr-Blanchard M."/>
            <person name="Klein C."/>
            <person name="Kobayashi Y."/>
            <person name="Koetter P."/>
            <person name="Koningstein G."/>
            <person name="Krogh S."/>
            <person name="Kumano M."/>
            <person name="Kurita K."/>
            <person name="Lapidus A."/>
            <person name="Lardinois S."/>
            <person name="Lauber J."/>
            <person name="Lazarevic V."/>
            <person name="Lee S.-M."/>
            <person name="Levine A."/>
            <person name="Liu H."/>
            <person name="Masuda S."/>
            <person name="Mauel C."/>
            <person name="Medigue C."/>
            <person name="Medina N."/>
            <person name="Mellado R.P."/>
            <person name="Mizuno M."/>
            <person name="Moestl D."/>
            <person name="Nakai S."/>
            <person name="Noback M."/>
            <person name="Noone D."/>
            <person name="O'Reilly M."/>
            <person name="Ogawa K."/>
            <person name="Ogiwara A."/>
            <person name="Oudega B."/>
            <person name="Park S.-H."/>
            <person name="Parro V."/>
            <person name="Pohl T.M."/>
            <person name="Portetelle D."/>
            <person name="Porwollik S."/>
            <person name="Prescott A.M."/>
            <person name="Presecan E."/>
            <person name="Pujic P."/>
            <person name="Purnelle B."/>
            <person name="Rapoport G."/>
            <person name="Rey M."/>
            <person name="Reynolds S."/>
            <person name="Rieger M."/>
            <person name="Rivolta C."/>
            <person name="Rocha E."/>
            <person name="Roche B."/>
            <person name="Rose M."/>
            <person name="Sadaie Y."/>
            <person name="Sato T."/>
            <person name="Scanlan E."/>
            <person name="Schleich S."/>
            <person name="Schroeter R."/>
            <person name="Scoffone F."/>
            <person name="Sekiguchi J."/>
            <person name="Sekowska A."/>
            <person name="Seror S.J."/>
            <person name="Serror P."/>
            <person name="Shin B.-S."/>
            <person name="Soldo B."/>
            <person name="Sorokin A."/>
            <person name="Tacconi E."/>
            <person name="Takagi T."/>
            <person name="Takahashi H."/>
            <person name="Takemaru K."/>
            <person name="Takeuchi M."/>
            <person name="Tamakoshi A."/>
            <person name="Tanaka T."/>
            <person name="Terpstra P."/>
            <person name="Tognoni A."/>
            <person name="Tosato V."/>
            <person name="Uchiyama S."/>
            <person name="Vandenbol M."/>
            <person name="Vannier F."/>
            <person name="Vassarotti A."/>
            <person name="Viari A."/>
            <person name="Wambutt R."/>
            <person name="Wedler E."/>
            <person name="Wedler H."/>
            <person name="Weitzenegger T."/>
            <person name="Winters P."/>
            <person name="Wipat A."/>
            <person name="Yamamoto H."/>
            <person name="Yamane K."/>
            <person name="Yasumoto K."/>
            <person name="Yata K."/>
            <person name="Yoshida K."/>
            <person name="Yoshikawa H.-F."/>
            <person name="Zumstein E."/>
            <person name="Yoshikawa H."/>
            <person name="Danchin A."/>
        </authorList>
    </citation>
    <scope>NUCLEOTIDE SEQUENCE [LARGE SCALE GENOMIC DNA]</scope>
    <source>
        <strain>168</strain>
    </source>
</reference>
<keyword id="KW-1185">Reference proteome</keyword>
<dbReference type="EMBL" id="Y14080">
    <property type="protein sequence ID" value="CAA74459.1"/>
    <property type="molecule type" value="Genomic_DNA"/>
</dbReference>
<dbReference type="EMBL" id="AL009126">
    <property type="protein sequence ID" value="CAB12809.1"/>
    <property type="molecule type" value="Genomic_DNA"/>
</dbReference>
<dbReference type="PIR" id="B69829">
    <property type="entry name" value="B69829"/>
</dbReference>
<dbReference type="RefSeq" id="WP_010886461.1">
    <property type="nucleotide sequence ID" value="NZ_OZ025638.1"/>
</dbReference>
<dbReference type="FunCoup" id="O07551">
    <property type="interactions" value="63"/>
</dbReference>
<dbReference type="STRING" id="224308.BSU09700"/>
<dbReference type="PaxDb" id="224308-BSU09700"/>
<dbReference type="EnsemblBacteria" id="CAB12809">
    <property type="protein sequence ID" value="CAB12809"/>
    <property type="gene ID" value="BSU_09700"/>
</dbReference>
<dbReference type="GeneID" id="939757"/>
<dbReference type="KEGG" id="bsu:BSU09700"/>
<dbReference type="PATRIC" id="fig|224308.179.peg.1043"/>
<dbReference type="InParanoid" id="O07551"/>
<dbReference type="OrthoDB" id="2897624at2"/>
<dbReference type="BioCyc" id="BSUB:BSU09700-MONOMER"/>
<dbReference type="Proteomes" id="UP000001570">
    <property type="component" value="Chromosome"/>
</dbReference>
<proteinExistence type="predicted"/>
<name>YHEJ_BACSU</name>
<organism>
    <name type="scientific">Bacillus subtilis (strain 168)</name>
    <dbReference type="NCBI Taxonomy" id="224308"/>
    <lineage>
        <taxon>Bacteria</taxon>
        <taxon>Bacillati</taxon>
        <taxon>Bacillota</taxon>
        <taxon>Bacilli</taxon>
        <taxon>Bacillales</taxon>
        <taxon>Bacillaceae</taxon>
        <taxon>Bacillus</taxon>
    </lineage>
</organism>
<protein>
    <recommendedName>
        <fullName>Uncharacterized protein YheJ</fullName>
    </recommendedName>
</protein>
<accession>O07551</accession>
<gene>
    <name type="primary">yheJ</name>
    <name type="ordered locus">BSU09700</name>
</gene>
<feature type="chain" id="PRO_0000049575" description="Uncharacterized protein YheJ">
    <location>
        <begin position="1"/>
        <end position="53"/>
    </location>
</feature>
<sequence length="53" mass="6312">MFIKQFHIGAANLLFCFRERFFRSDRALKSAVRNISVKKGMELTLHAFFIYKI</sequence>